<keyword id="KW-1185">Reference proteome</keyword>
<keyword id="KW-0687">Ribonucleoprotein</keyword>
<keyword id="KW-0689">Ribosomal protein</keyword>
<sequence>MAVKIRLKRLGKIRAPHYRIVVADSRTKRDGRVIEEIGLYHPTEEPSRIEVDSDRAQYWLGVGSQPTEQVLVLLKLTGDWGTFKGDKNAVSTVKVAGAKEAFVADEKKKPVLKPKAAKPAEAEAVIEAEEAAEVEVVAEAGDIADEAADGEKA</sequence>
<dbReference type="EMBL" id="AE016822">
    <property type="protein sequence ID" value="AAT89298.1"/>
    <property type="molecule type" value="Genomic_DNA"/>
</dbReference>
<dbReference type="RefSeq" id="WP_011186289.1">
    <property type="nucleotide sequence ID" value="NC_006087.1"/>
</dbReference>
<dbReference type="SMR" id="Q6AE98"/>
<dbReference type="STRING" id="281090.Lxx14900"/>
<dbReference type="KEGG" id="lxx:Lxx14900"/>
<dbReference type="eggNOG" id="COG0228">
    <property type="taxonomic scope" value="Bacteria"/>
</dbReference>
<dbReference type="HOGENOM" id="CLU_100590_1_1_11"/>
<dbReference type="Proteomes" id="UP000001306">
    <property type="component" value="Chromosome"/>
</dbReference>
<dbReference type="GO" id="GO:0005737">
    <property type="term" value="C:cytoplasm"/>
    <property type="evidence" value="ECO:0007669"/>
    <property type="project" value="UniProtKB-ARBA"/>
</dbReference>
<dbReference type="GO" id="GO:0015935">
    <property type="term" value="C:small ribosomal subunit"/>
    <property type="evidence" value="ECO:0007669"/>
    <property type="project" value="TreeGrafter"/>
</dbReference>
<dbReference type="GO" id="GO:0003735">
    <property type="term" value="F:structural constituent of ribosome"/>
    <property type="evidence" value="ECO:0007669"/>
    <property type="project" value="InterPro"/>
</dbReference>
<dbReference type="GO" id="GO:0006412">
    <property type="term" value="P:translation"/>
    <property type="evidence" value="ECO:0007669"/>
    <property type="project" value="UniProtKB-UniRule"/>
</dbReference>
<dbReference type="Gene3D" id="3.30.1320.10">
    <property type="match status" value="1"/>
</dbReference>
<dbReference type="HAMAP" id="MF_00385">
    <property type="entry name" value="Ribosomal_bS16"/>
    <property type="match status" value="1"/>
</dbReference>
<dbReference type="InterPro" id="IPR000307">
    <property type="entry name" value="Ribosomal_bS16"/>
</dbReference>
<dbReference type="InterPro" id="IPR020592">
    <property type="entry name" value="Ribosomal_bS16_CS"/>
</dbReference>
<dbReference type="InterPro" id="IPR023803">
    <property type="entry name" value="Ribosomal_bS16_dom_sf"/>
</dbReference>
<dbReference type="NCBIfam" id="NF011093">
    <property type="entry name" value="PRK14520.1"/>
    <property type="match status" value="1"/>
</dbReference>
<dbReference type="NCBIfam" id="TIGR00002">
    <property type="entry name" value="S16"/>
    <property type="match status" value="1"/>
</dbReference>
<dbReference type="PANTHER" id="PTHR12919">
    <property type="entry name" value="30S RIBOSOMAL PROTEIN S16"/>
    <property type="match status" value="1"/>
</dbReference>
<dbReference type="PANTHER" id="PTHR12919:SF20">
    <property type="entry name" value="SMALL RIBOSOMAL SUBUNIT PROTEIN BS16M"/>
    <property type="match status" value="1"/>
</dbReference>
<dbReference type="Pfam" id="PF00886">
    <property type="entry name" value="Ribosomal_S16"/>
    <property type="match status" value="1"/>
</dbReference>
<dbReference type="SUPFAM" id="SSF54565">
    <property type="entry name" value="Ribosomal protein S16"/>
    <property type="match status" value="1"/>
</dbReference>
<dbReference type="PROSITE" id="PS00732">
    <property type="entry name" value="RIBOSOMAL_S16"/>
    <property type="match status" value="1"/>
</dbReference>
<evidence type="ECO:0000255" key="1">
    <source>
        <dbReference type="HAMAP-Rule" id="MF_00385"/>
    </source>
</evidence>
<evidence type="ECO:0000305" key="2"/>
<accession>Q6AE98</accession>
<protein>
    <recommendedName>
        <fullName evidence="1">Small ribosomal subunit protein bS16</fullName>
    </recommendedName>
    <alternativeName>
        <fullName evidence="2">30S ribosomal protein S16</fullName>
    </alternativeName>
</protein>
<feature type="chain" id="PRO_0000167199" description="Small ribosomal subunit protein bS16">
    <location>
        <begin position="1"/>
        <end position="153"/>
    </location>
</feature>
<reference key="1">
    <citation type="journal article" date="2004" name="Mol. Plant Microbe Interact.">
        <title>The genome sequence of the Gram-positive sugarcane pathogen Leifsonia xyli subsp. xyli.</title>
        <authorList>
            <person name="Monteiro-Vitorello C.B."/>
            <person name="Camargo L.E.A."/>
            <person name="Van Sluys M.A."/>
            <person name="Kitajima J.P."/>
            <person name="Truffi D."/>
            <person name="do Amaral A.M."/>
            <person name="Harakava R."/>
            <person name="de Oliveira J.C.F."/>
            <person name="Wood D."/>
            <person name="de Oliveira M.C."/>
            <person name="Miyaki C.Y."/>
            <person name="Takita M.A."/>
            <person name="da Silva A.C.R."/>
            <person name="Furlan L.R."/>
            <person name="Carraro D.M."/>
            <person name="Camarotte G."/>
            <person name="Almeida N.F. Jr."/>
            <person name="Carrer H."/>
            <person name="Coutinho L.L."/>
            <person name="El-Dorry H.A."/>
            <person name="Ferro M.I.T."/>
            <person name="Gagliardi P.R."/>
            <person name="Giglioti E."/>
            <person name="Goldman M.H.S."/>
            <person name="Goldman G.H."/>
            <person name="Kimura E.T."/>
            <person name="Ferro E.S."/>
            <person name="Kuramae E.E."/>
            <person name="Lemos E.G.M."/>
            <person name="Lemos M.V.F."/>
            <person name="Mauro S.M.Z."/>
            <person name="Machado M.A."/>
            <person name="Marino C.L."/>
            <person name="Menck C.F."/>
            <person name="Nunes L.R."/>
            <person name="Oliveira R.C."/>
            <person name="Pereira G.G."/>
            <person name="Siqueira W."/>
            <person name="de Souza A.A."/>
            <person name="Tsai S.M."/>
            <person name="Zanca A.S."/>
            <person name="Simpson A.J.G."/>
            <person name="Brumbley S.M."/>
            <person name="Setubal J.C."/>
        </authorList>
    </citation>
    <scope>NUCLEOTIDE SEQUENCE [LARGE SCALE GENOMIC DNA]</scope>
    <source>
        <strain>CTCB07</strain>
    </source>
</reference>
<name>RS16_LEIXX</name>
<gene>
    <name evidence="1" type="primary">rpsP</name>
    <name type="ordered locus">Lxx14900</name>
</gene>
<organism>
    <name type="scientific">Leifsonia xyli subsp. xyli (strain CTCB07)</name>
    <dbReference type="NCBI Taxonomy" id="281090"/>
    <lineage>
        <taxon>Bacteria</taxon>
        <taxon>Bacillati</taxon>
        <taxon>Actinomycetota</taxon>
        <taxon>Actinomycetes</taxon>
        <taxon>Micrococcales</taxon>
        <taxon>Microbacteriaceae</taxon>
        <taxon>Leifsonia</taxon>
    </lineage>
</organism>
<proteinExistence type="inferred from homology"/>
<comment type="similarity">
    <text evidence="1">Belongs to the bacterial ribosomal protein bS16 family.</text>
</comment>